<evidence type="ECO:0000250" key="1"/>
<evidence type="ECO:0000255" key="2">
    <source>
        <dbReference type="HAMAP-Rule" id="MF_00118"/>
    </source>
</evidence>
<comment type="function">
    <text evidence="2">GTP hydrolase that promotes the GTP-dependent binding of aminoacyl-tRNA to the A-site of ribosomes during protein biosynthesis.</text>
</comment>
<comment type="catalytic activity">
    <reaction evidence="2">
        <text>GTP + H2O = GDP + phosphate + H(+)</text>
        <dbReference type="Rhea" id="RHEA:19669"/>
        <dbReference type="ChEBI" id="CHEBI:15377"/>
        <dbReference type="ChEBI" id="CHEBI:15378"/>
        <dbReference type="ChEBI" id="CHEBI:37565"/>
        <dbReference type="ChEBI" id="CHEBI:43474"/>
        <dbReference type="ChEBI" id="CHEBI:58189"/>
        <dbReference type="EC" id="3.6.5.3"/>
    </reaction>
    <physiologicalReaction direction="left-to-right" evidence="2">
        <dbReference type="Rhea" id="RHEA:19670"/>
    </physiologicalReaction>
</comment>
<comment type="subunit">
    <text evidence="2">Monomer.</text>
</comment>
<comment type="subcellular location">
    <subcellularLocation>
        <location evidence="2">Cytoplasm</location>
    </subcellularLocation>
</comment>
<comment type="similarity">
    <text evidence="2">Belongs to the TRAFAC class translation factor GTPase superfamily. Classic translation factor GTPase family. EF-Tu/EF-1A subfamily.</text>
</comment>
<sequence>MAKAKFERNKPHVNVGTIGHVDHGKTTLTAAISHVLAKTYGGEAKDFSQIDNAPEERERGITINTSHIEYDTPTRHYAHVDCPGHADYVKNMITGAAQMDGAILVVASTDGPMPQTREHILLSRQVGVPFIIVFMNKCDMVDDAELLELVEMEVRELLSEYDFPGDDLPVIQGSALKALEGEPEWEAKIIELAEALDSYIPEPERDIDKPFLMPIEDVFSISGRGTVVTGRVERGIVRVGDEVEIVGIRATTKTTCTGVEMFRKLLDEGRAGENCGILLRGTKRDDVERGQVLSKPGSINPHTTFESEVYVLSKEEGGRHTPFFKGYRPQFYFRTTDVTGTIELPEGVEMVMPGDNIKMKVTLICPIAMDEGLRFAIREGGRTVGAGVVAKIFA</sequence>
<gene>
    <name evidence="2" type="primary">tuf1</name>
    <name type="ordered locus">Shewmr7_0180</name>
</gene>
<organism>
    <name type="scientific">Shewanella sp. (strain MR-7)</name>
    <dbReference type="NCBI Taxonomy" id="60481"/>
    <lineage>
        <taxon>Bacteria</taxon>
        <taxon>Pseudomonadati</taxon>
        <taxon>Pseudomonadota</taxon>
        <taxon>Gammaproteobacteria</taxon>
        <taxon>Alteromonadales</taxon>
        <taxon>Shewanellaceae</taxon>
        <taxon>Shewanella</taxon>
    </lineage>
</organism>
<name>EFTU1_SHESR</name>
<keyword id="KW-0963">Cytoplasm</keyword>
<keyword id="KW-0251">Elongation factor</keyword>
<keyword id="KW-0342">GTP-binding</keyword>
<keyword id="KW-0378">Hydrolase</keyword>
<keyword id="KW-0460">Magnesium</keyword>
<keyword id="KW-0479">Metal-binding</keyword>
<keyword id="KW-0547">Nucleotide-binding</keyword>
<keyword id="KW-0648">Protein biosynthesis</keyword>
<dbReference type="EC" id="3.6.5.3" evidence="2"/>
<dbReference type="EMBL" id="CP000444">
    <property type="protein sequence ID" value="ABI41186.1"/>
    <property type="molecule type" value="Genomic_DNA"/>
</dbReference>
<dbReference type="SMR" id="Q0I0B9"/>
<dbReference type="KEGG" id="shm:Shewmr7_0180"/>
<dbReference type="HOGENOM" id="CLU_007265_0_1_6"/>
<dbReference type="GO" id="GO:0005829">
    <property type="term" value="C:cytosol"/>
    <property type="evidence" value="ECO:0007669"/>
    <property type="project" value="TreeGrafter"/>
</dbReference>
<dbReference type="GO" id="GO:0005525">
    <property type="term" value="F:GTP binding"/>
    <property type="evidence" value="ECO:0007669"/>
    <property type="project" value="UniProtKB-UniRule"/>
</dbReference>
<dbReference type="GO" id="GO:0003924">
    <property type="term" value="F:GTPase activity"/>
    <property type="evidence" value="ECO:0007669"/>
    <property type="project" value="InterPro"/>
</dbReference>
<dbReference type="GO" id="GO:0097216">
    <property type="term" value="F:guanosine tetraphosphate binding"/>
    <property type="evidence" value="ECO:0007669"/>
    <property type="project" value="UniProtKB-ARBA"/>
</dbReference>
<dbReference type="GO" id="GO:0003746">
    <property type="term" value="F:translation elongation factor activity"/>
    <property type="evidence" value="ECO:0007669"/>
    <property type="project" value="UniProtKB-UniRule"/>
</dbReference>
<dbReference type="CDD" id="cd01884">
    <property type="entry name" value="EF_Tu"/>
    <property type="match status" value="1"/>
</dbReference>
<dbReference type="CDD" id="cd03697">
    <property type="entry name" value="EFTU_II"/>
    <property type="match status" value="1"/>
</dbReference>
<dbReference type="CDD" id="cd03707">
    <property type="entry name" value="EFTU_III"/>
    <property type="match status" value="1"/>
</dbReference>
<dbReference type="FunFam" id="2.40.30.10:FF:000001">
    <property type="entry name" value="Elongation factor Tu"/>
    <property type="match status" value="1"/>
</dbReference>
<dbReference type="FunFam" id="3.40.50.300:FF:000003">
    <property type="entry name" value="Elongation factor Tu"/>
    <property type="match status" value="1"/>
</dbReference>
<dbReference type="Gene3D" id="3.40.50.300">
    <property type="entry name" value="P-loop containing nucleotide triphosphate hydrolases"/>
    <property type="match status" value="1"/>
</dbReference>
<dbReference type="Gene3D" id="2.40.30.10">
    <property type="entry name" value="Translation factors"/>
    <property type="match status" value="2"/>
</dbReference>
<dbReference type="HAMAP" id="MF_00118_B">
    <property type="entry name" value="EF_Tu_B"/>
    <property type="match status" value="1"/>
</dbReference>
<dbReference type="InterPro" id="IPR041709">
    <property type="entry name" value="EF-Tu_GTP-bd"/>
</dbReference>
<dbReference type="InterPro" id="IPR050055">
    <property type="entry name" value="EF-Tu_GTPase"/>
</dbReference>
<dbReference type="InterPro" id="IPR004161">
    <property type="entry name" value="EFTu-like_2"/>
</dbReference>
<dbReference type="InterPro" id="IPR033720">
    <property type="entry name" value="EFTU_2"/>
</dbReference>
<dbReference type="InterPro" id="IPR031157">
    <property type="entry name" value="G_TR_CS"/>
</dbReference>
<dbReference type="InterPro" id="IPR027417">
    <property type="entry name" value="P-loop_NTPase"/>
</dbReference>
<dbReference type="InterPro" id="IPR005225">
    <property type="entry name" value="Small_GTP-bd"/>
</dbReference>
<dbReference type="InterPro" id="IPR000795">
    <property type="entry name" value="T_Tr_GTP-bd_dom"/>
</dbReference>
<dbReference type="InterPro" id="IPR009000">
    <property type="entry name" value="Transl_B-barrel_sf"/>
</dbReference>
<dbReference type="InterPro" id="IPR009001">
    <property type="entry name" value="Transl_elong_EF1A/Init_IF2_C"/>
</dbReference>
<dbReference type="InterPro" id="IPR004541">
    <property type="entry name" value="Transl_elong_EFTu/EF1A_bac/org"/>
</dbReference>
<dbReference type="InterPro" id="IPR004160">
    <property type="entry name" value="Transl_elong_EFTu/EF1A_C"/>
</dbReference>
<dbReference type="NCBIfam" id="TIGR00485">
    <property type="entry name" value="EF-Tu"/>
    <property type="match status" value="1"/>
</dbReference>
<dbReference type="NCBIfam" id="NF000766">
    <property type="entry name" value="PRK00049.1"/>
    <property type="match status" value="1"/>
</dbReference>
<dbReference type="NCBIfam" id="NF009372">
    <property type="entry name" value="PRK12735.1"/>
    <property type="match status" value="1"/>
</dbReference>
<dbReference type="NCBIfam" id="NF009373">
    <property type="entry name" value="PRK12736.1"/>
    <property type="match status" value="1"/>
</dbReference>
<dbReference type="NCBIfam" id="TIGR00231">
    <property type="entry name" value="small_GTP"/>
    <property type="match status" value="1"/>
</dbReference>
<dbReference type="PANTHER" id="PTHR43721:SF22">
    <property type="entry name" value="ELONGATION FACTOR TU, MITOCHONDRIAL"/>
    <property type="match status" value="1"/>
</dbReference>
<dbReference type="PANTHER" id="PTHR43721">
    <property type="entry name" value="ELONGATION FACTOR TU-RELATED"/>
    <property type="match status" value="1"/>
</dbReference>
<dbReference type="Pfam" id="PF00009">
    <property type="entry name" value="GTP_EFTU"/>
    <property type="match status" value="1"/>
</dbReference>
<dbReference type="Pfam" id="PF03144">
    <property type="entry name" value="GTP_EFTU_D2"/>
    <property type="match status" value="1"/>
</dbReference>
<dbReference type="Pfam" id="PF03143">
    <property type="entry name" value="GTP_EFTU_D3"/>
    <property type="match status" value="1"/>
</dbReference>
<dbReference type="PRINTS" id="PR00315">
    <property type="entry name" value="ELONGATNFCT"/>
</dbReference>
<dbReference type="SUPFAM" id="SSF50465">
    <property type="entry name" value="EF-Tu/eEF-1alpha/eIF2-gamma C-terminal domain"/>
    <property type="match status" value="1"/>
</dbReference>
<dbReference type="SUPFAM" id="SSF52540">
    <property type="entry name" value="P-loop containing nucleoside triphosphate hydrolases"/>
    <property type="match status" value="1"/>
</dbReference>
<dbReference type="SUPFAM" id="SSF50447">
    <property type="entry name" value="Translation proteins"/>
    <property type="match status" value="1"/>
</dbReference>
<dbReference type="PROSITE" id="PS00301">
    <property type="entry name" value="G_TR_1"/>
    <property type="match status" value="1"/>
</dbReference>
<dbReference type="PROSITE" id="PS51722">
    <property type="entry name" value="G_TR_2"/>
    <property type="match status" value="1"/>
</dbReference>
<protein>
    <recommendedName>
        <fullName evidence="2">Elongation factor Tu 1</fullName>
        <shortName evidence="2">EF-Tu 1</shortName>
        <ecNumber evidence="2">3.6.5.3</ecNumber>
    </recommendedName>
</protein>
<reference key="1">
    <citation type="submission" date="2006-08" db="EMBL/GenBank/DDBJ databases">
        <title>Complete sequence of chromosome 1 of Shewanella sp. MR-7.</title>
        <authorList>
            <person name="Copeland A."/>
            <person name="Lucas S."/>
            <person name="Lapidus A."/>
            <person name="Barry K."/>
            <person name="Detter J.C."/>
            <person name="Glavina del Rio T."/>
            <person name="Hammon N."/>
            <person name="Israni S."/>
            <person name="Dalin E."/>
            <person name="Tice H."/>
            <person name="Pitluck S."/>
            <person name="Kiss H."/>
            <person name="Brettin T."/>
            <person name="Bruce D."/>
            <person name="Han C."/>
            <person name="Tapia R."/>
            <person name="Gilna P."/>
            <person name="Schmutz J."/>
            <person name="Larimer F."/>
            <person name="Land M."/>
            <person name="Hauser L."/>
            <person name="Kyrpides N."/>
            <person name="Mikhailova N."/>
            <person name="Nealson K."/>
            <person name="Konstantinidis K."/>
            <person name="Klappenbach J."/>
            <person name="Tiedje J."/>
            <person name="Richardson P."/>
        </authorList>
    </citation>
    <scope>NUCLEOTIDE SEQUENCE [LARGE SCALE GENOMIC DNA]</scope>
    <source>
        <strain>MR-7</strain>
    </source>
</reference>
<accession>Q0I0B9</accession>
<proteinExistence type="inferred from homology"/>
<feature type="chain" id="PRO_0000337536" description="Elongation factor Tu 1">
    <location>
        <begin position="1"/>
        <end position="394"/>
    </location>
</feature>
<feature type="domain" description="tr-type G">
    <location>
        <begin position="10"/>
        <end position="204"/>
    </location>
</feature>
<feature type="region of interest" description="G1" evidence="1">
    <location>
        <begin position="19"/>
        <end position="26"/>
    </location>
</feature>
<feature type="region of interest" description="G2" evidence="1">
    <location>
        <begin position="60"/>
        <end position="64"/>
    </location>
</feature>
<feature type="region of interest" description="G3" evidence="1">
    <location>
        <begin position="81"/>
        <end position="84"/>
    </location>
</feature>
<feature type="region of interest" description="G4" evidence="1">
    <location>
        <begin position="136"/>
        <end position="139"/>
    </location>
</feature>
<feature type="region of interest" description="G5" evidence="1">
    <location>
        <begin position="174"/>
        <end position="176"/>
    </location>
</feature>
<feature type="binding site" evidence="2">
    <location>
        <begin position="19"/>
        <end position="26"/>
    </location>
    <ligand>
        <name>GTP</name>
        <dbReference type="ChEBI" id="CHEBI:37565"/>
    </ligand>
</feature>
<feature type="binding site" evidence="2">
    <location>
        <position position="26"/>
    </location>
    <ligand>
        <name>Mg(2+)</name>
        <dbReference type="ChEBI" id="CHEBI:18420"/>
    </ligand>
</feature>
<feature type="binding site" evidence="2">
    <location>
        <begin position="81"/>
        <end position="85"/>
    </location>
    <ligand>
        <name>GTP</name>
        <dbReference type="ChEBI" id="CHEBI:37565"/>
    </ligand>
</feature>
<feature type="binding site" evidence="2">
    <location>
        <begin position="136"/>
        <end position="139"/>
    </location>
    <ligand>
        <name>GTP</name>
        <dbReference type="ChEBI" id="CHEBI:37565"/>
    </ligand>
</feature>